<organism>
    <name type="scientific">Campylobacter concisus (strain 13826)</name>
    <dbReference type="NCBI Taxonomy" id="360104"/>
    <lineage>
        <taxon>Bacteria</taxon>
        <taxon>Pseudomonadati</taxon>
        <taxon>Campylobacterota</taxon>
        <taxon>Epsilonproteobacteria</taxon>
        <taxon>Campylobacterales</taxon>
        <taxon>Campylobacteraceae</taxon>
        <taxon>Campylobacter</taxon>
    </lineage>
</organism>
<comment type="function">
    <text evidence="1">Part of the twin-arginine translocation (Tat) system that transports large folded proteins containing a characteristic twin-arginine motif in their signal peptide across membranes. TatA could form the protein-conducting channel of the Tat system.</text>
</comment>
<comment type="subunit">
    <text evidence="1">The Tat system comprises two distinct complexes: a TatABC complex, containing multiple copies of TatA, TatB and TatC subunits, and a separate TatA complex, containing only TatA subunits. Substrates initially bind to the TatABC complex, which probably triggers association of the separate TatA complex to form the active translocon.</text>
</comment>
<comment type="subcellular location">
    <subcellularLocation>
        <location evidence="1">Cell inner membrane</location>
        <topology evidence="1">Single-pass membrane protein</topology>
    </subcellularLocation>
</comment>
<comment type="similarity">
    <text evidence="1">Belongs to the TatA/E family.</text>
</comment>
<proteinExistence type="inferred from homology"/>
<evidence type="ECO:0000255" key="1">
    <source>
        <dbReference type="HAMAP-Rule" id="MF_00236"/>
    </source>
</evidence>
<evidence type="ECO:0000256" key="2">
    <source>
        <dbReference type="SAM" id="MobiDB-lite"/>
    </source>
</evidence>
<gene>
    <name evidence="1" type="primary">tatA</name>
    <name type="ordered locus">Ccon26_15330</name>
    <name type="ORF">CCC13826_0544</name>
</gene>
<accession>A7ZF22</accession>
<keyword id="KW-0997">Cell inner membrane</keyword>
<keyword id="KW-1003">Cell membrane</keyword>
<keyword id="KW-0472">Membrane</keyword>
<keyword id="KW-0653">Protein transport</keyword>
<keyword id="KW-0811">Translocation</keyword>
<keyword id="KW-0812">Transmembrane</keyword>
<keyword id="KW-1133">Transmembrane helix</keyword>
<keyword id="KW-0813">Transport</keyword>
<dbReference type="EMBL" id="CP000792">
    <property type="protein sequence ID" value="EAT99190.1"/>
    <property type="molecule type" value="Genomic_DNA"/>
</dbReference>
<dbReference type="RefSeq" id="WP_002941241.1">
    <property type="nucleotide sequence ID" value="NC_009802.2"/>
</dbReference>
<dbReference type="SMR" id="A7ZF22"/>
<dbReference type="STRING" id="360104.CCC13826_0544"/>
<dbReference type="KEGG" id="cco:CCC13826_0544"/>
<dbReference type="eggNOG" id="COG1826">
    <property type="taxonomic scope" value="Bacteria"/>
</dbReference>
<dbReference type="HOGENOM" id="CLU_086034_5_4_7"/>
<dbReference type="OrthoDB" id="9813726at2"/>
<dbReference type="Proteomes" id="UP000001121">
    <property type="component" value="Chromosome"/>
</dbReference>
<dbReference type="GO" id="GO:0033281">
    <property type="term" value="C:TAT protein transport complex"/>
    <property type="evidence" value="ECO:0007669"/>
    <property type="project" value="UniProtKB-UniRule"/>
</dbReference>
<dbReference type="GO" id="GO:0008320">
    <property type="term" value="F:protein transmembrane transporter activity"/>
    <property type="evidence" value="ECO:0007669"/>
    <property type="project" value="UniProtKB-UniRule"/>
</dbReference>
<dbReference type="GO" id="GO:0043953">
    <property type="term" value="P:protein transport by the Tat complex"/>
    <property type="evidence" value="ECO:0007669"/>
    <property type="project" value="UniProtKB-UniRule"/>
</dbReference>
<dbReference type="Gene3D" id="1.20.5.3310">
    <property type="match status" value="1"/>
</dbReference>
<dbReference type="HAMAP" id="MF_00236">
    <property type="entry name" value="TatA_E"/>
    <property type="match status" value="1"/>
</dbReference>
<dbReference type="InterPro" id="IPR003369">
    <property type="entry name" value="TatA/B/E"/>
</dbReference>
<dbReference type="InterPro" id="IPR006312">
    <property type="entry name" value="TatA/E"/>
</dbReference>
<dbReference type="NCBIfam" id="TIGR01411">
    <property type="entry name" value="tatAE"/>
    <property type="match status" value="1"/>
</dbReference>
<dbReference type="PANTHER" id="PTHR42982">
    <property type="entry name" value="SEC-INDEPENDENT PROTEIN TRANSLOCASE PROTEIN TATA"/>
    <property type="match status" value="1"/>
</dbReference>
<dbReference type="PANTHER" id="PTHR42982:SF1">
    <property type="entry name" value="SEC-INDEPENDENT PROTEIN TRANSLOCASE PROTEIN TATA"/>
    <property type="match status" value="1"/>
</dbReference>
<dbReference type="Pfam" id="PF02416">
    <property type="entry name" value="TatA_B_E"/>
    <property type="match status" value="1"/>
</dbReference>
<feature type="chain" id="PRO_1000071809" description="Sec-independent protein translocase protein TatA">
    <location>
        <begin position="1"/>
        <end position="73"/>
    </location>
</feature>
<feature type="transmembrane region" description="Helical" evidence="1">
    <location>
        <begin position="1"/>
        <end position="21"/>
    </location>
</feature>
<feature type="region of interest" description="Disordered" evidence="2">
    <location>
        <begin position="43"/>
        <end position="73"/>
    </location>
</feature>
<name>TATA_CAMC1</name>
<protein>
    <recommendedName>
        <fullName evidence="1">Sec-independent protein translocase protein TatA</fullName>
    </recommendedName>
</protein>
<sequence>MGSFSIGHWLIVLAIIVLLFGAKKIPELAKGLGKGIKTFKAEMEDTTPEKSEKVEHKEESATSQKIEETTKNA</sequence>
<reference key="1">
    <citation type="submission" date="2007-10" db="EMBL/GenBank/DDBJ databases">
        <title>Genome sequence of Campylobacter concisus 13826 isolated from human feces.</title>
        <authorList>
            <person name="Fouts D.E."/>
            <person name="Mongodin E.F."/>
            <person name="Puiu D."/>
            <person name="Sebastian Y."/>
            <person name="Miller W.G."/>
            <person name="Mandrell R.E."/>
            <person name="On S."/>
            <person name="Nelson K.E."/>
        </authorList>
    </citation>
    <scope>NUCLEOTIDE SEQUENCE [LARGE SCALE GENOMIC DNA]</scope>
    <source>
        <strain>13826</strain>
    </source>
</reference>